<proteinExistence type="evidence at transcript level"/>
<evidence type="ECO:0000250" key="1"/>
<evidence type="ECO:0000255" key="2"/>
<evidence type="ECO:0000269" key="3">
    <source>
    </source>
</evidence>
<evidence type="ECO:0000305" key="4"/>
<accession>Q3E8X3</accession>
<accession>Q1PDS5</accession>
<comment type="subcellular location">
    <subcellularLocation>
        <location evidence="1">Membrane</location>
        <topology evidence="1">Multi-pass membrane protein</topology>
    </subcellularLocation>
</comment>
<comment type="tissue specificity">
    <text evidence="3">Expressed in flowers.</text>
</comment>
<comment type="similarity">
    <text evidence="4">Belongs to the major facilitator superfamily. Proton-dependent oligopeptide transporter (POT/PTR) (TC 2.A.17) family.</text>
</comment>
<keyword id="KW-0472">Membrane</keyword>
<keyword id="KW-1185">Reference proteome</keyword>
<keyword id="KW-0812">Transmembrane</keyword>
<keyword id="KW-1133">Transmembrane helix</keyword>
<keyword id="KW-0813">Transport</keyword>
<dbReference type="EMBL" id="AF262039">
    <property type="status" value="NOT_ANNOTATED_CDS"/>
    <property type="molecule type" value="Genomic_DNA"/>
</dbReference>
<dbReference type="EMBL" id="BA000015">
    <property type="status" value="NOT_ANNOTATED_CDS"/>
    <property type="molecule type" value="Genomic_DNA"/>
</dbReference>
<dbReference type="EMBL" id="CP002688">
    <property type="protein sequence ID" value="AED93804.1"/>
    <property type="molecule type" value="Genomic_DNA"/>
</dbReference>
<dbReference type="EMBL" id="DQ446993">
    <property type="protein sequence ID" value="ABE66185.1"/>
    <property type="molecule type" value="mRNA"/>
</dbReference>
<dbReference type="RefSeq" id="NP_198199.2">
    <property type="nucleotide sequence ID" value="NM_122730.3"/>
</dbReference>
<dbReference type="SMR" id="Q3E8X3"/>
<dbReference type="FunCoup" id="Q3E8X3">
    <property type="interactions" value="1"/>
</dbReference>
<dbReference type="STRING" id="3702.Q3E8X3"/>
<dbReference type="PaxDb" id="3702-AT5G28470.1"/>
<dbReference type="EnsemblPlants" id="AT5G28470.1">
    <property type="protein sequence ID" value="AT5G28470.1"/>
    <property type="gene ID" value="AT5G28470"/>
</dbReference>
<dbReference type="GeneID" id="832936"/>
<dbReference type="Gramene" id="AT5G28470.1">
    <property type="protein sequence ID" value="AT5G28470.1"/>
    <property type="gene ID" value="AT5G28470"/>
</dbReference>
<dbReference type="KEGG" id="ath:AT5G28470"/>
<dbReference type="Araport" id="AT5G28470"/>
<dbReference type="TAIR" id="AT5G28470">
    <property type="gene designation" value="FST1"/>
</dbReference>
<dbReference type="eggNOG" id="KOG1237">
    <property type="taxonomic scope" value="Eukaryota"/>
</dbReference>
<dbReference type="HOGENOM" id="CLU_009313_4_2_1"/>
<dbReference type="InParanoid" id="Q3E8X3"/>
<dbReference type="PhylomeDB" id="Q3E8X3"/>
<dbReference type="PRO" id="PR:Q3E8X3"/>
<dbReference type="Proteomes" id="UP000006548">
    <property type="component" value="Chromosome 5"/>
</dbReference>
<dbReference type="ExpressionAtlas" id="Q3E8X3">
    <property type="expression patterns" value="baseline and differential"/>
</dbReference>
<dbReference type="GO" id="GO:0005886">
    <property type="term" value="C:plasma membrane"/>
    <property type="evidence" value="ECO:0000314"/>
    <property type="project" value="TAIR"/>
</dbReference>
<dbReference type="GO" id="GO:0022857">
    <property type="term" value="F:transmembrane transporter activity"/>
    <property type="evidence" value="ECO:0000315"/>
    <property type="project" value="TAIR"/>
</dbReference>
<dbReference type="GO" id="GO:0010584">
    <property type="term" value="P:pollen exine formation"/>
    <property type="evidence" value="ECO:0000315"/>
    <property type="project" value="TAIR"/>
</dbReference>
<dbReference type="GO" id="GO:0009860">
    <property type="term" value="P:pollen tube growth"/>
    <property type="evidence" value="ECO:0000270"/>
    <property type="project" value="TAIR"/>
</dbReference>
<dbReference type="CDD" id="cd17416">
    <property type="entry name" value="MFS_NPF1_2"/>
    <property type="match status" value="1"/>
</dbReference>
<dbReference type="Gene3D" id="1.20.1250.20">
    <property type="entry name" value="MFS general substrate transporter like domains"/>
    <property type="match status" value="1"/>
</dbReference>
<dbReference type="InterPro" id="IPR036259">
    <property type="entry name" value="MFS_trans_sf"/>
</dbReference>
<dbReference type="InterPro" id="IPR000109">
    <property type="entry name" value="POT_fam"/>
</dbReference>
<dbReference type="PANTHER" id="PTHR11654">
    <property type="entry name" value="OLIGOPEPTIDE TRANSPORTER-RELATED"/>
    <property type="match status" value="1"/>
</dbReference>
<dbReference type="Pfam" id="PF00854">
    <property type="entry name" value="PTR2"/>
    <property type="match status" value="1"/>
</dbReference>
<dbReference type="SUPFAM" id="SSF103473">
    <property type="entry name" value="MFS general substrate transporter"/>
    <property type="match status" value="1"/>
</dbReference>
<reference key="1">
    <citation type="journal article" date="2000" name="Nature">
        <title>Sequence and analysis of chromosome 5 of the plant Arabidopsis thaliana.</title>
        <authorList>
            <person name="Tabata S."/>
            <person name="Kaneko T."/>
            <person name="Nakamura Y."/>
            <person name="Kotani H."/>
            <person name="Kato T."/>
            <person name="Asamizu E."/>
            <person name="Miyajima N."/>
            <person name="Sasamoto S."/>
            <person name="Kimura T."/>
            <person name="Hosouchi T."/>
            <person name="Kawashima K."/>
            <person name="Kohara M."/>
            <person name="Matsumoto M."/>
            <person name="Matsuno A."/>
            <person name="Muraki A."/>
            <person name="Nakayama S."/>
            <person name="Nakazaki N."/>
            <person name="Naruo K."/>
            <person name="Okumura S."/>
            <person name="Shinpo S."/>
            <person name="Takeuchi C."/>
            <person name="Wada T."/>
            <person name="Watanabe A."/>
            <person name="Yamada M."/>
            <person name="Yasuda M."/>
            <person name="Sato S."/>
            <person name="de la Bastide M."/>
            <person name="Huang E."/>
            <person name="Spiegel L."/>
            <person name="Gnoj L."/>
            <person name="O'Shaughnessy A."/>
            <person name="Preston R."/>
            <person name="Habermann K."/>
            <person name="Murray J."/>
            <person name="Johnson D."/>
            <person name="Rohlfing T."/>
            <person name="Nelson J."/>
            <person name="Stoneking T."/>
            <person name="Pepin K."/>
            <person name="Spieth J."/>
            <person name="Sekhon M."/>
            <person name="Armstrong J."/>
            <person name="Becker M."/>
            <person name="Belter E."/>
            <person name="Cordum H."/>
            <person name="Cordes M."/>
            <person name="Courtney L."/>
            <person name="Courtney W."/>
            <person name="Dante M."/>
            <person name="Du H."/>
            <person name="Edwards J."/>
            <person name="Fryman J."/>
            <person name="Haakensen B."/>
            <person name="Lamar E."/>
            <person name="Latreille P."/>
            <person name="Leonard S."/>
            <person name="Meyer R."/>
            <person name="Mulvaney E."/>
            <person name="Ozersky P."/>
            <person name="Riley A."/>
            <person name="Strowmatt C."/>
            <person name="Wagner-McPherson C."/>
            <person name="Wollam A."/>
            <person name="Yoakum M."/>
            <person name="Bell M."/>
            <person name="Dedhia N."/>
            <person name="Parnell L."/>
            <person name="Shah R."/>
            <person name="Rodriguez M."/>
            <person name="Hoon See L."/>
            <person name="Vil D."/>
            <person name="Baker J."/>
            <person name="Kirchoff K."/>
            <person name="Toth K."/>
            <person name="King L."/>
            <person name="Bahret A."/>
            <person name="Miller B."/>
            <person name="Marra M.A."/>
            <person name="Martienssen R."/>
            <person name="McCombie W.R."/>
            <person name="Wilson R.K."/>
            <person name="Murphy G."/>
            <person name="Bancroft I."/>
            <person name="Volckaert G."/>
            <person name="Wambutt R."/>
            <person name="Duesterhoeft A."/>
            <person name="Stiekema W."/>
            <person name="Pohl T."/>
            <person name="Entian K.-D."/>
            <person name="Terryn N."/>
            <person name="Hartley N."/>
            <person name="Bent E."/>
            <person name="Johnson S."/>
            <person name="Langham S.-A."/>
            <person name="McCullagh B."/>
            <person name="Robben J."/>
            <person name="Grymonprez B."/>
            <person name="Zimmermann W."/>
            <person name="Ramsperger U."/>
            <person name="Wedler H."/>
            <person name="Balke K."/>
            <person name="Wedler E."/>
            <person name="Peters S."/>
            <person name="van Staveren M."/>
            <person name="Dirkse W."/>
            <person name="Mooijman P."/>
            <person name="Klein Lankhorst R."/>
            <person name="Weitzenegger T."/>
            <person name="Bothe G."/>
            <person name="Rose M."/>
            <person name="Hauf J."/>
            <person name="Berneiser S."/>
            <person name="Hempel S."/>
            <person name="Feldpausch M."/>
            <person name="Lamberth S."/>
            <person name="Villarroel R."/>
            <person name="Gielen J."/>
            <person name="Ardiles W."/>
            <person name="Bents O."/>
            <person name="Lemcke K."/>
            <person name="Kolesov G."/>
            <person name="Mayer K.F.X."/>
            <person name="Rudd S."/>
            <person name="Schoof H."/>
            <person name="Schueller C."/>
            <person name="Zaccaria P."/>
            <person name="Mewes H.-W."/>
            <person name="Bevan M."/>
            <person name="Fransz P.F."/>
        </authorList>
    </citation>
    <scope>NUCLEOTIDE SEQUENCE [LARGE SCALE GENOMIC DNA]</scope>
    <source>
        <strain>cv. Columbia</strain>
    </source>
</reference>
<reference key="2">
    <citation type="journal article" date="2017" name="Plant J.">
        <title>Araport11: a complete reannotation of the Arabidopsis thaliana reference genome.</title>
        <authorList>
            <person name="Cheng C.Y."/>
            <person name="Krishnakumar V."/>
            <person name="Chan A.P."/>
            <person name="Thibaud-Nissen F."/>
            <person name="Schobel S."/>
            <person name="Town C.D."/>
        </authorList>
    </citation>
    <scope>GENOME REANNOTATION</scope>
    <source>
        <strain>cv. Columbia</strain>
    </source>
</reference>
<reference key="3">
    <citation type="journal article" date="2006" name="Plant Biotechnol. J.">
        <title>Simultaneous high-throughput recombinational cloning of open reading frames in closed and open configurations.</title>
        <authorList>
            <person name="Underwood B.A."/>
            <person name="Vanderhaeghen R."/>
            <person name="Whitford R."/>
            <person name="Town C.D."/>
            <person name="Hilson P."/>
        </authorList>
    </citation>
    <scope>NUCLEOTIDE SEQUENCE [LARGE SCALE MRNA]</scope>
    <source>
        <strain>cv. Columbia</strain>
    </source>
</reference>
<reference key="4">
    <citation type="journal article" date="2007" name="FEBS Lett.">
        <title>Nitrate transporters and peptide transporters.</title>
        <authorList>
            <person name="Tsay Y.F."/>
            <person name="Chiu C.C."/>
            <person name="Tsai C.B."/>
            <person name="Ho C.H."/>
            <person name="Hsu P.K."/>
        </authorList>
    </citation>
    <scope>TISSUE SPECIFICITY</scope>
    <scope>GENE FAMILY</scope>
</reference>
<reference key="5">
    <citation type="journal article" date="2010" name="Plant Cell">
        <title>The Arabidopsis nitrate transporter NRT1.8 functions in nitrate removal from the xylem sap and mediates cadmium tolerance.</title>
        <authorList>
            <person name="Li J.Y."/>
            <person name="Fu Y.L."/>
            <person name="Pike S.M."/>
            <person name="Bao J."/>
            <person name="Tian W."/>
            <person name="Zhang Y."/>
            <person name="Chen C.Z."/>
            <person name="Zhang Y."/>
            <person name="Li H.M."/>
            <person name="Huang J."/>
            <person name="Li L.G."/>
            <person name="Schroeder J.I."/>
            <person name="Gassmann W."/>
            <person name="Gong J.M."/>
        </authorList>
    </citation>
    <scope>GENE FAMILY</scope>
</reference>
<reference key="6">
    <citation type="journal article" date="2014" name="Trends Plant Sci.">
        <title>A unified nomenclature of NITRATE TRANSPORTER 1/PEPTIDE TRANSPORTER family members in plants.</title>
        <authorList>
            <person name="Leran S."/>
            <person name="Varala K."/>
            <person name="Boyer J.C."/>
            <person name="Chiurazzi M."/>
            <person name="Crawford N."/>
            <person name="Daniel-Vedele F."/>
            <person name="David L."/>
            <person name="Dickstein R."/>
            <person name="Fernandez E."/>
            <person name="Forde B."/>
            <person name="Gassmann W."/>
            <person name="Geiger D."/>
            <person name="Gojon A."/>
            <person name="Gong J.M."/>
            <person name="Halkier B.A."/>
            <person name="Harris J.M."/>
            <person name="Hedrich R."/>
            <person name="Limami A.M."/>
            <person name="Rentsch D."/>
            <person name="Seo M."/>
            <person name="Tsay Y.F."/>
            <person name="Zhang M."/>
            <person name="Coruzzi G."/>
            <person name="Lacombe B."/>
        </authorList>
    </citation>
    <scope>GENE FAMILY</scope>
    <scope>NOMENCLATURE</scope>
</reference>
<organism>
    <name type="scientific">Arabidopsis thaliana</name>
    <name type="common">Mouse-ear cress</name>
    <dbReference type="NCBI Taxonomy" id="3702"/>
    <lineage>
        <taxon>Eukaryota</taxon>
        <taxon>Viridiplantae</taxon>
        <taxon>Streptophyta</taxon>
        <taxon>Embryophyta</taxon>
        <taxon>Tracheophyta</taxon>
        <taxon>Spermatophyta</taxon>
        <taxon>Magnoliopsida</taxon>
        <taxon>eudicotyledons</taxon>
        <taxon>Gunneridae</taxon>
        <taxon>Pentapetalae</taxon>
        <taxon>rosids</taxon>
        <taxon>malvids</taxon>
        <taxon>Brassicales</taxon>
        <taxon>Brassicaceae</taxon>
        <taxon>Camelineae</taxon>
        <taxon>Arabidopsis</taxon>
    </lineage>
</organism>
<gene>
    <name type="primary">NPF2.8</name>
    <name type="ordered locus">At5g28470</name>
    <name type="ORF">F24J2.10</name>
</gene>
<feature type="chain" id="PRO_0000399986" description="Protein NRT1/ PTR FAMILY 2.8">
    <location>
        <begin position="1"/>
        <end position="559"/>
    </location>
</feature>
<feature type="transmembrane region" description="Helical" evidence="2">
    <location>
        <begin position="57"/>
        <end position="77"/>
    </location>
</feature>
<feature type="transmembrane region" description="Helical" evidence="2">
    <location>
        <begin position="92"/>
        <end position="112"/>
    </location>
</feature>
<feature type="transmembrane region" description="Helical" evidence="2">
    <location>
        <begin position="132"/>
        <end position="152"/>
    </location>
</feature>
<feature type="transmembrane region" description="Helical" evidence="2">
    <location>
        <begin position="178"/>
        <end position="198"/>
    </location>
</feature>
<feature type="transmembrane region" description="Helical" evidence="2">
    <location>
        <begin position="206"/>
        <end position="226"/>
    </location>
</feature>
<feature type="transmembrane region" description="Helical" evidence="2">
    <location>
        <begin position="321"/>
        <end position="341"/>
    </location>
</feature>
<feature type="transmembrane region" description="Helical" evidence="2">
    <location>
        <begin position="374"/>
        <end position="394"/>
    </location>
</feature>
<feature type="transmembrane region" description="Helical" evidence="2">
    <location>
        <begin position="404"/>
        <end position="424"/>
    </location>
</feature>
<feature type="transmembrane region" description="Helical" evidence="2">
    <location>
        <begin position="437"/>
        <end position="457"/>
    </location>
</feature>
<feature type="transmembrane region" description="Helical" evidence="2">
    <location>
        <begin position="481"/>
        <end position="501"/>
    </location>
</feature>
<feature type="transmembrane region" description="Helical" evidence="2">
    <location>
        <begin position="529"/>
        <end position="549"/>
    </location>
</feature>
<sequence length="559" mass="61600">MDVESSSPSSHALIKKEKGGWRAIKYIIANESFEKLASMSLIGNLSVYLMTKYNLGGVFLVNVINIWFGSCNILTLAGAFVSDAYLGRFWTLLLGSIASFIGMGIFALTAALPSLRPDACIDPSNCSNQPAKWQLGVLFSGLGLLAIGAGGVRPCNIAFGADQFDTSTKKGKAHLETFFNWWYFSFTVALVIALTGVVYIQTNISWVIGFVIPTACLALSITTFVIGQHTYICAKAEGSVFADIVKVVTAACKKRKVKPGSDITFYIGPSNDGSPTTLVRDKHRLRFFDKASIVTNPNELNEDGNAKYKWRLCSVQQVKNLKCVTAILPVWVTGIACFILTDQQNIYGILQAMQMDKTFGPHNFQVPAGWMNLVSMITLAIWISLYECVIIPIVKQITGRKKRLTLKHRIEIVMGIICMIVAGFQEKKRRASALKNGSFVSPVSIVMLLPQFALAGLTEAFSAVALMEFLTVRMPEHMRAVAGAIFFLSSSIASYICTLLINVIDAVTRKEGKSWLGDKDLNKNRLENYFFIIAGIQVANLLYFRLFASRYATENKKGH</sequence>
<name>PTR52_ARATH</name>
<protein>
    <recommendedName>
        <fullName>Protein NRT1/ PTR FAMILY 2.8</fullName>
        <shortName>AtNPF2.8</shortName>
    </recommendedName>
</protein>